<comment type="function">
    <text evidence="1">Chaperone involved in the correct folding and assembly of outer membrane proteins. Recognizes specific patterns of aromatic residues and the orientation of their side chains, which are found more frequently in integral outer membrane proteins. May act in both early periplasmic and late outer membrane-associated steps of protein maturation.</text>
</comment>
<comment type="catalytic activity">
    <reaction evidence="1">
        <text>[protein]-peptidylproline (omega=180) = [protein]-peptidylproline (omega=0)</text>
        <dbReference type="Rhea" id="RHEA:16237"/>
        <dbReference type="Rhea" id="RHEA-COMP:10747"/>
        <dbReference type="Rhea" id="RHEA-COMP:10748"/>
        <dbReference type="ChEBI" id="CHEBI:83833"/>
        <dbReference type="ChEBI" id="CHEBI:83834"/>
        <dbReference type="EC" id="5.2.1.8"/>
    </reaction>
</comment>
<comment type="subcellular location">
    <subcellularLocation>
        <location evidence="1">Periplasm</location>
    </subcellularLocation>
    <text evidence="1">Is capable of associating with the outer membrane.</text>
</comment>
<comment type="domain">
    <text evidence="1">The PPIase activity resides only in the second parvulin domain. The N-terminal region and the C-terminal tail are necessary and sufficient for the chaperone activity of SurA. The PPIase activity is dispensable for SurA to function as a chaperone. The N-terminal region and the C-terminal tail are also required for porin recognition.</text>
</comment>
<proteinExistence type="inferred from homology"/>
<keyword id="KW-0143">Chaperone</keyword>
<keyword id="KW-0413">Isomerase</keyword>
<keyword id="KW-0574">Periplasm</keyword>
<keyword id="KW-1185">Reference proteome</keyword>
<keyword id="KW-0677">Repeat</keyword>
<keyword id="KW-0697">Rotamase</keyword>
<keyword id="KW-0732">Signal</keyword>
<organism>
    <name type="scientific">Cupriavidus metallidurans (strain ATCC 43123 / DSM 2839 / NBRC 102507 / CH34)</name>
    <name type="common">Ralstonia metallidurans</name>
    <dbReference type="NCBI Taxonomy" id="266264"/>
    <lineage>
        <taxon>Bacteria</taxon>
        <taxon>Pseudomonadati</taxon>
        <taxon>Pseudomonadota</taxon>
        <taxon>Betaproteobacteria</taxon>
        <taxon>Burkholderiales</taxon>
        <taxon>Burkholderiaceae</taxon>
        <taxon>Cupriavidus</taxon>
    </lineage>
</organism>
<name>SURA_CUPMC</name>
<dbReference type="EC" id="5.2.1.8" evidence="1"/>
<dbReference type="EMBL" id="CP000352">
    <property type="protein sequence ID" value="ABF07323.1"/>
    <property type="molecule type" value="Genomic_DNA"/>
</dbReference>
<dbReference type="RefSeq" id="WP_011515311.1">
    <property type="nucleotide sequence ID" value="NC_007973.1"/>
</dbReference>
<dbReference type="SMR" id="Q1LRA3"/>
<dbReference type="STRING" id="266264.Rmet_0437"/>
<dbReference type="KEGG" id="rme:Rmet_0437"/>
<dbReference type="eggNOG" id="COG0760">
    <property type="taxonomic scope" value="Bacteria"/>
</dbReference>
<dbReference type="HOGENOM" id="CLU_034646_11_0_4"/>
<dbReference type="Proteomes" id="UP000002429">
    <property type="component" value="Chromosome"/>
</dbReference>
<dbReference type="GO" id="GO:0030288">
    <property type="term" value="C:outer membrane-bounded periplasmic space"/>
    <property type="evidence" value="ECO:0007669"/>
    <property type="project" value="InterPro"/>
</dbReference>
<dbReference type="GO" id="GO:0042277">
    <property type="term" value="F:peptide binding"/>
    <property type="evidence" value="ECO:0007669"/>
    <property type="project" value="InterPro"/>
</dbReference>
<dbReference type="GO" id="GO:0003755">
    <property type="term" value="F:peptidyl-prolyl cis-trans isomerase activity"/>
    <property type="evidence" value="ECO:0007669"/>
    <property type="project" value="UniProtKB-UniRule"/>
</dbReference>
<dbReference type="GO" id="GO:0051082">
    <property type="term" value="F:unfolded protein binding"/>
    <property type="evidence" value="ECO:0007669"/>
    <property type="project" value="UniProtKB-UniRule"/>
</dbReference>
<dbReference type="GO" id="GO:0043165">
    <property type="term" value="P:Gram-negative-bacterium-type cell outer membrane assembly"/>
    <property type="evidence" value="ECO:0007669"/>
    <property type="project" value="InterPro"/>
</dbReference>
<dbReference type="GO" id="GO:0006457">
    <property type="term" value="P:protein folding"/>
    <property type="evidence" value="ECO:0007669"/>
    <property type="project" value="UniProtKB-UniRule"/>
</dbReference>
<dbReference type="GO" id="GO:0050821">
    <property type="term" value="P:protein stabilization"/>
    <property type="evidence" value="ECO:0007669"/>
    <property type="project" value="InterPro"/>
</dbReference>
<dbReference type="Gene3D" id="3.10.50.40">
    <property type="match status" value="2"/>
</dbReference>
<dbReference type="Gene3D" id="1.10.4030.10">
    <property type="entry name" value="Porin chaperone SurA, peptide-binding domain"/>
    <property type="match status" value="1"/>
</dbReference>
<dbReference type="HAMAP" id="MF_01183">
    <property type="entry name" value="Chaperone_SurA"/>
    <property type="match status" value="1"/>
</dbReference>
<dbReference type="InterPro" id="IPR050280">
    <property type="entry name" value="OMP_Chaperone_SurA"/>
</dbReference>
<dbReference type="InterPro" id="IPR046357">
    <property type="entry name" value="PPIase_dom_sf"/>
</dbReference>
<dbReference type="InterPro" id="IPR000297">
    <property type="entry name" value="PPIase_PpiC"/>
</dbReference>
<dbReference type="InterPro" id="IPR023058">
    <property type="entry name" value="PPIase_PpiC_CS"/>
</dbReference>
<dbReference type="InterPro" id="IPR023034">
    <property type="entry name" value="PPIase_SurA"/>
</dbReference>
<dbReference type="InterPro" id="IPR015391">
    <property type="entry name" value="SurA_N"/>
</dbReference>
<dbReference type="InterPro" id="IPR027304">
    <property type="entry name" value="Trigger_fact/SurA_dom_sf"/>
</dbReference>
<dbReference type="PANTHER" id="PTHR47637">
    <property type="entry name" value="CHAPERONE SURA"/>
    <property type="match status" value="1"/>
</dbReference>
<dbReference type="PANTHER" id="PTHR47637:SF1">
    <property type="entry name" value="CHAPERONE SURA"/>
    <property type="match status" value="1"/>
</dbReference>
<dbReference type="Pfam" id="PF00639">
    <property type="entry name" value="Rotamase"/>
    <property type="match status" value="1"/>
</dbReference>
<dbReference type="Pfam" id="PF13616">
    <property type="entry name" value="Rotamase_3"/>
    <property type="match status" value="1"/>
</dbReference>
<dbReference type="Pfam" id="PF09312">
    <property type="entry name" value="SurA_N"/>
    <property type="match status" value="1"/>
</dbReference>
<dbReference type="SUPFAM" id="SSF54534">
    <property type="entry name" value="FKBP-like"/>
    <property type="match status" value="2"/>
</dbReference>
<dbReference type="SUPFAM" id="SSF109998">
    <property type="entry name" value="Triger factor/SurA peptide-binding domain-like"/>
    <property type="match status" value="1"/>
</dbReference>
<dbReference type="PROSITE" id="PS01096">
    <property type="entry name" value="PPIC_PPIASE_1"/>
    <property type="match status" value="1"/>
</dbReference>
<dbReference type="PROSITE" id="PS50198">
    <property type="entry name" value="PPIC_PPIASE_2"/>
    <property type="match status" value="2"/>
</dbReference>
<reference key="1">
    <citation type="journal article" date="2010" name="PLoS ONE">
        <title>The complete genome sequence of Cupriavidus metallidurans strain CH34, a master survivalist in harsh and anthropogenic environments.</title>
        <authorList>
            <person name="Janssen P.J."/>
            <person name="Van Houdt R."/>
            <person name="Moors H."/>
            <person name="Monsieurs P."/>
            <person name="Morin N."/>
            <person name="Michaux A."/>
            <person name="Benotmane M.A."/>
            <person name="Leys N."/>
            <person name="Vallaeys T."/>
            <person name="Lapidus A."/>
            <person name="Monchy S."/>
            <person name="Medigue C."/>
            <person name="Taghavi S."/>
            <person name="McCorkle S."/>
            <person name="Dunn J."/>
            <person name="van der Lelie D."/>
            <person name="Mergeay M."/>
        </authorList>
    </citation>
    <scope>NUCLEOTIDE SEQUENCE [LARGE SCALE GENOMIC DNA]</scope>
    <source>
        <strain>ATCC 43123 / DSM 2839 / NBRC 102507 / CH34</strain>
    </source>
</reference>
<evidence type="ECO:0000255" key="1">
    <source>
        <dbReference type="HAMAP-Rule" id="MF_01183"/>
    </source>
</evidence>
<evidence type="ECO:0000256" key="2">
    <source>
        <dbReference type="SAM" id="MobiDB-lite"/>
    </source>
</evidence>
<gene>
    <name evidence="1" type="primary">surA</name>
    <name type="ordered locus">Rmet_0437</name>
</gene>
<accession>Q1LRA3</accession>
<feature type="signal peptide" evidence="1">
    <location>
        <begin position="1"/>
        <end position="33"/>
    </location>
</feature>
<feature type="chain" id="PRO_5000118485" description="Chaperone SurA">
    <location>
        <begin position="34"/>
        <end position="493"/>
    </location>
</feature>
<feature type="domain" description="PpiC 1" evidence="1">
    <location>
        <begin position="230"/>
        <end position="332"/>
    </location>
</feature>
<feature type="domain" description="PpiC 2" evidence="1">
    <location>
        <begin position="346"/>
        <end position="444"/>
    </location>
</feature>
<feature type="region of interest" description="Disordered" evidence="2">
    <location>
        <begin position="46"/>
        <end position="76"/>
    </location>
</feature>
<feature type="compositionally biased region" description="Low complexity" evidence="2">
    <location>
        <begin position="48"/>
        <end position="58"/>
    </location>
</feature>
<sequence length="493" mass="54230">MKRQAFSLLSRLNPWQQLLLSAVLVTLAAPAAAQLRAPGTRTQGIFTQQGSQSASQGSTVAPSQPMMGVPQPSSQPRSQLVDEVVAVVNNSVITRRELLDRADEIESQLRAAKREVPPRPDLLGEVLERLVMERVQTQAAQEAGIKVTDQEVDRAIESVAQQNKMSATELRSRVEASGMSWTKYRDELRKQVQVIRLREREVDSKVQVYDGEIDNYLAARNGGQAAASGPTEFNVAQILVRVPEDASDAQKAQLKTKAEGLLKQVQGGADFAELAKANSEAPEASQGGSLGFREIGRLPAVFANAVVDLQPGAVVPEVLESANGFHVVKLVSKRTAAAQPAASDRIAQTQVRHILIRTGPNMPEAEAKRQMATIRDRITHGVDFADAARRYSQDGSASQGGELGWVSPGELVPEFEQAMNRLRPGEISDPVVTQFGVHLIQVENRRETEVSPEKQRDFARAEVREQKLRAAYDDWVRQLRSAAYVEYRINRQR</sequence>
<protein>
    <recommendedName>
        <fullName evidence="1">Chaperone SurA</fullName>
    </recommendedName>
    <alternativeName>
        <fullName evidence="1">Peptidyl-prolyl cis-trans isomerase SurA</fullName>
        <shortName evidence="1">PPIase SurA</shortName>
        <ecNumber evidence="1">5.2.1.8</ecNumber>
    </alternativeName>
    <alternativeName>
        <fullName evidence="1">Rotamase SurA</fullName>
    </alternativeName>
</protein>